<organism>
    <name type="scientific">Vibrio parahaemolyticus serotype O3:K6 (strain RIMD 2210633)</name>
    <dbReference type="NCBI Taxonomy" id="223926"/>
    <lineage>
        <taxon>Bacteria</taxon>
        <taxon>Pseudomonadati</taxon>
        <taxon>Pseudomonadota</taxon>
        <taxon>Gammaproteobacteria</taxon>
        <taxon>Vibrionales</taxon>
        <taxon>Vibrionaceae</taxon>
        <taxon>Vibrio</taxon>
    </lineage>
</organism>
<keyword id="KW-0460">Magnesium</keyword>
<keyword id="KW-0479">Metal-binding</keyword>
<keyword id="KW-0784">Thiamine biosynthesis</keyword>
<keyword id="KW-0808">Transferase</keyword>
<feature type="chain" id="PRO_0000157060" description="Thiamine-phosphate synthase">
    <location>
        <begin position="1"/>
        <end position="204"/>
    </location>
</feature>
<feature type="binding site" evidence="1">
    <location>
        <begin position="35"/>
        <end position="39"/>
    </location>
    <ligand>
        <name>4-amino-2-methyl-5-(diphosphooxymethyl)pyrimidine</name>
        <dbReference type="ChEBI" id="CHEBI:57841"/>
    </ligand>
</feature>
<feature type="binding site" evidence="1">
    <location>
        <position position="67"/>
    </location>
    <ligand>
        <name>4-amino-2-methyl-5-(diphosphooxymethyl)pyrimidine</name>
        <dbReference type="ChEBI" id="CHEBI:57841"/>
    </ligand>
</feature>
<feature type="binding site" evidence="1">
    <location>
        <position position="68"/>
    </location>
    <ligand>
        <name>Mg(2+)</name>
        <dbReference type="ChEBI" id="CHEBI:18420"/>
    </ligand>
</feature>
<feature type="binding site" evidence="1">
    <location>
        <position position="87"/>
    </location>
    <ligand>
        <name>Mg(2+)</name>
        <dbReference type="ChEBI" id="CHEBI:18420"/>
    </ligand>
</feature>
<feature type="binding site" evidence="1">
    <location>
        <position position="106"/>
    </location>
    <ligand>
        <name>4-amino-2-methyl-5-(diphosphooxymethyl)pyrimidine</name>
        <dbReference type="ChEBI" id="CHEBI:57841"/>
    </ligand>
</feature>
<feature type="binding site" evidence="1">
    <location>
        <begin position="132"/>
        <end position="134"/>
    </location>
    <ligand>
        <name>2-[(2R,5Z)-2-carboxy-4-methylthiazol-5(2H)-ylidene]ethyl phosphate</name>
        <dbReference type="ChEBI" id="CHEBI:62899"/>
    </ligand>
</feature>
<feature type="binding site" evidence="1">
    <location>
        <position position="135"/>
    </location>
    <ligand>
        <name>4-amino-2-methyl-5-(diphosphooxymethyl)pyrimidine</name>
        <dbReference type="ChEBI" id="CHEBI:57841"/>
    </ligand>
</feature>
<feature type="binding site" evidence="1">
    <location>
        <position position="163"/>
    </location>
    <ligand>
        <name>2-[(2R,5Z)-2-carboxy-4-methylthiazol-5(2H)-ylidene]ethyl phosphate</name>
        <dbReference type="ChEBI" id="CHEBI:62899"/>
    </ligand>
</feature>
<feature type="binding site" evidence="1">
    <location>
        <begin position="183"/>
        <end position="184"/>
    </location>
    <ligand>
        <name>2-[(2R,5Z)-2-carboxy-4-methylthiazol-5(2H)-ylidene]ethyl phosphate</name>
        <dbReference type="ChEBI" id="CHEBI:62899"/>
    </ligand>
</feature>
<evidence type="ECO:0000255" key="1">
    <source>
        <dbReference type="HAMAP-Rule" id="MF_00097"/>
    </source>
</evidence>
<reference key="1">
    <citation type="journal article" date="2003" name="Lancet">
        <title>Genome sequence of Vibrio parahaemolyticus: a pathogenic mechanism distinct from that of V. cholerae.</title>
        <authorList>
            <person name="Makino K."/>
            <person name="Oshima K."/>
            <person name="Kurokawa K."/>
            <person name="Yokoyama K."/>
            <person name="Uda T."/>
            <person name="Tagomori K."/>
            <person name="Iijima Y."/>
            <person name="Najima M."/>
            <person name="Nakano M."/>
            <person name="Yamashita A."/>
            <person name="Kubota Y."/>
            <person name="Kimura S."/>
            <person name="Yasunaga T."/>
            <person name="Honda T."/>
            <person name="Shinagawa H."/>
            <person name="Hattori M."/>
            <person name="Iida T."/>
        </authorList>
    </citation>
    <scope>NUCLEOTIDE SEQUENCE [LARGE SCALE GENOMIC DNA]</scope>
    <source>
        <strain>RIMD 2210633</strain>
    </source>
</reference>
<protein>
    <recommendedName>
        <fullName evidence="1">Thiamine-phosphate synthase</fullName>
        <shortName evidence="1">TP synthase</shortName>
        <shortName evidence="1">TPS</shortName>
        <ecNumber evidence="1">2.5.1.3</ecNumber>
    </recommendedName>
    <alternativeName>
        <fullName evidence="1">Thiamine-phosphate pyrophosphorylase</fullName>
        <shortName evidence="1">TMP pyrophosphorylase</shortName>
        <shortName evidence="1">TMP-PPase</shortName>
    </alternativeName>
</protein>
<gene>
    <name evidence="1" type="primary">thiE</name>
    <name type="ordered locus">VPA0130</name>
</gene>
<name>THIE_VIBPA</name>
<proteinExistence type="inferred from homology"/>
<comment type="function">
    <text evidence="1">Condenses 4-methyl-5-(beta-hydroxyethyl)thiazole monophosphate (THZ-P) and 2-methyl-4-amino-5-hydroxymethyl pyrimidine pyrophosphate (HMP-PP) to form thiamine monophosphate (TMP).</text>
</comment>
<comment type="catalytic activity">
    <reaction evidence="1">
        <text>2-[(2R,5Z)-2-carboxy-4-methylthiazol-5(2H)-ylidene]ethyl phosphate + 4-amino-2-methyl-5-(diphosphooxymethyl)pyrimidine + 2 H(+) = thiamine phosphate + CO2 + diphosphate</text>
        <dbReference type="Rhea" id="RHEA:47844"/>
        <dbReference type="ChEBI" id="CHEBI:15378"/>
        <dbReference type="ChEBI" id="CHEBI:16526"/>
        <dbReference type="ChEBI" id="CHEBI:33019"/>
        <dbReference type="ChEBI" id="CHEBI:37575"/>
        <dbReference type="ChEBI" id="CHEBI:57841"/>
        <dbReference type="ChEBI" id="CHEBI:62899"/>
        <dbReference type="EC" id="2.5.1.3"/>
    </reaction>
</comment>
<comment type="catalytic activity">
    <reaction evidence="1">
        <text>2-(2-carboxy-4-methylthiazol-5-yl)ethyl phosphate + 4-amino-2-methyl-5-(diphosphooxymethyl)pyrimidine + 2 H(+) = thiamine phosphate + CO2 + diphosphate</text>
        <dbReference type="Rhea" id="RHEA:47848"/>
        <dbReference type="ChEBI" id="CHEBI:15378"/>
        <dbReference type="ChEBI" id="CHEBI:16526"/>
        <dbReference type="ChEBI" id="CHEBI:33019"/>
        <dbReference type="ChEBI" id="CHEBI:37575"/>
        <dbReference type="ChEBI" id="CHEBI:57841"/>
        <dbReference type="ChEBI" id="CHEBI:62890"/>
        <dbReference type="EC" id="2.5.1.3"/>
    </reaction>
</comment>
<comment type="catalytic activity">
    <reaction evidence="1">
        <text>4-methyl-5-(2-phosphooxyethyl)-thiazole + 4-amino-2-methyl-5-(diphosphooxymethyl)pyrimidine + H(+) = thiamine phosphate + diphosphate</text>
        <dbReference type="Rhea" id="RHEA:22328"/>
        <dbReference type="ChEBI" id="CHEBI:15378"/>
        <dbReference type="ChEBI" id="CHEBI:33019"/>
        <dbReference type="ChEBI" id="CHEBI:37575"/>
        <dbReference type="ChEBI" id="CHEBI:57841"/>
        <dbReference type="ChEBI" id="CHEBI:58296"/>
        <dbReference type="EC" id="2.5.1.3"/>
    </reaction>
</comment>
<comment type="cofactor">
    <cofactor evidence="1">
        <name>Mg(2+)</name>
        <dbReference type="ChEBI" id="CHEBI:18420"/>
    </cofactor>
    <text evidence="1">Binds 1 Mg(2+) ion per subunit.</text>
</comment>
<comment type="pathway">
    <text evidence="1">Cofactor biosynthesis; thiamine diphosphate biosynthesis; thiamine phosphate from 4-amino-2-methyl-5-diphosphomethylpyrimidine and 4-methyl-5-(2-phosphoethyl)-thiazole: step 1/1.</text>
</comment>
<comment type="similarity">
    <text evidence="1">Belongs to the thiamine-phosphate synthase family.</text>
</comment>
<dbReference type="EC" id="2.5.1.3" evidence="1"/>
<dbReference type="EMBL" id="BA000032">
    <property type="protein sequence ID" value="BAC61473.1"/>
    <property type="molecule type" value="Genomic_DNA"/>
</dbReference>
<dbReference type="RefSeq" id="NP_799640.1">
    <property type="nucleotide sequence ID" value="NC_004605.1"/>
</dbReference>
<dbReference type="RefSeq" id="WP_005482839.1">
    <property type="nucleotide sequence ID" value="NC_004605.1"/>
</dbReference>
<dbReference type="SMR" id="Q87JW8"/>
<dbReference type="GeneID" id="1190809"/>
<dbReference type="KEGG" id="vpa:VPA0130"/>
<dbReference type="PATRIC" id="fig|223926.6.peg.3090"/>
<dbReference type="eggNOG" id="COG0352">
    <property type="taxonomic scope" value="Bacteria"/>
</dbReference>
<dbReference type="HOGENOM" id="CLU_018272_3_2_6"/>
<dbReference type="UniPathway" id="UPA00060">
    <property type="reaction ID" value="UER00141"/>
</dbReference>
<dbReference type="Proteomes" id="UP000002493">
    <property type="component" value="Chromosome 2"/>
</dbReference>
<dbReference type="GO" id="GO:0005737">
    <property type="term" value="C:cytoplasm"/>
    <property type="evidence" value="ECO:0007669"/>
    <property type="project" value="TreeGrafter"/>
</dbReference>
<dbReference type="GO" id="GO:0000287">
    <property type="term" value="F:magnesium ion binding"/>
    <property type="evidence" value="ECO:0007669"/>
    <property type="project" value="UniProtKB-UniRule"/>
</dbReference>
<dbReference type="GO" id="GO:0004789">
    <property type="term" value="F:thiamine-phosphate diphosphorylase activity"/>
    <property type="evidence" value="ECO:0007669"/>
    <property type="project" value="UniProtKB-UniRule"/>
</dbReference>
<dbReference type="GO" id="GO:0009228">
    <property type="term" value="P:thiamine biosynthetic process"/>
    <property type="evidence" value="ECO:0007669"/>
    <property type="project" value="UniProtKB-KW"/>
</dbReference>
<dbReference type="GO" id="GO:0009229">
    <property type="term" value="P:thiamine diphosphate biosynthetic process"/>
    <property type="evidence" value="ECO:0007669"/>
    <property type="project" value="UniProtKB-UniRule"/>
</dbReference>
<dbReference type="CDD" id="cd00564">
    <property type="entry name" value="TMP_TenI"/>
    <property type="match status" value="1"/>
</dbReference>
<dbReference type="FunFam" id="3.20.20.70:FF:000096">
    <property type="entry name" value="Thiamine-phosphate synthase"/>
    <property type="match status" value="1"/>
</dbReference>
<dbReference type="Gene3D" id="3.20.20.70">
    <property type="entry name" value="Aldolase class I"/>
    <property type="match status" value="1"/>
</dbReference>
<dbReference type="HAMAP" id="MF_00097">
    <property type="entry name" value="TMP_synthase"/>
    <property type="match status" value="1"/>
</dbReference>
<dbReference type="InterPro" id="IPR013785">
    <property type="entry name" value="Aldolase_TIM"/>
</dbReference>
<dbReference type="InterPro" id="IPR036206">
    <property type="entry name" value="ThiamineP_synth_sf"/>
</dbReference>
<dbReference type="InterPro" id="IPR022998">
    <property type="entry name" value="ThiamineP_synth_TenI"/>
</dbReference>
<dbReference type="InterPro" id="IPR034291">
    <property type="entry name" value="TMP_synthase"/>
</dbReference>
<dbReference type="NCBIfam" id="TIGR00693">
    <property type="entry name" value="thiE"/>
    <property type="match status" value="1"/>
</dbReference>
<dbReference type="PANTHER" id="PTHR20857">
    <property type="entry name" value="THIAMINE-PHOSPHATE PYROPHOSPHORYLASE"/>
    <property type="match status" value="1"/>
</dbReference>
<dbReference type="PANTHER" id="PTHR20857:SF15">
    <property type="entry name" value="THIAMINE-PHOSPHATE SYNTHASE"/>
    <property type="match status" value="1"/>
</dbReference>
<dbReference type="Pfam" id="PF02581">
    <property type="entry name" value="TMP-TENI"/>
    <property type="match status" value="1"/>
</dbReference>
<dbReference type="SUPFAM" id="SSF51391">
    <property type="entry name" value="Thiamin phosphate synthase"/>
    <property type="match status" value="1"/>
</dbReference>
<accession>Q87JW8</accession>
<sequence length="204" mass="21796">MNAYRLYLVTDDQQDLPTLKHVVRKAVEGGVTMVQVREKHGDVREFIERAQAVKTILEGTGVPLIINDRVDVALAVDADGVHLGQSDMPAEIARQLIGPNKILGLSIETEDQLAEADSLPIDYIGLSAIFATPTKTNTKKHWGIGGLKMALNTTSLPIVAIGGINETNIPALSATGVHGLALVSAICHAENPTKAAEYLLSLMD</sequence>